<organism>
    <name type="scientific">Delftia acidovorans (strain DSM 14801 / SPH-1)</name>
    <dbReference type="NCBI Taxonomy" id="398578"/>
    <lineage>
        <taxon>Bacteria</taxon>
        <taxon>Pseudomonadati</taxon>
        <taxon>Pseudomonadota</taxon>
        <taxon>Betaproteobacteria</taxon>
        <taxon>Burkholderiales</taxon>
        <taxon>Comamonadaceae</taxon>
        <taxon>Delftia</taxon>
    </lineage>
</organism>
<sequence length="282" mass="30969">MRVALGVAYNGQRYSGWQSQLSGNTIQDHLEAALGRFAAQEVHTLCAGRTDAGVHGLMQVVHFDTPLDRAPFSWVRGTNTFLPPDIAVQWAQPVPDAFHSRACATARRYAYVLLQSPVRPSVEAGRVGWVFHALDGDAMQAAARHLLGEHDFSSFRASGCQAKSPVKTLHRLSITRRMAGDGAQMAAASSMRPGDAAMECCYWRFEFEGSAFLHHMVRNIMGCLIAIGQGTYAPQWMQQVLDARSRDAAAPTFSPDGLYFLGPVYDPSWGLPSRSPAYDWLP</sequence>
<reference key="1">
    <citation type="submission" date="2007-11" db="EMBL/GenBank/DDBJ databases">
        <title>Complete sequence of Delftia acidovorans DSM 14801 / SPH-1.</title>
        <authorList>
            <person name="Copeland A."/>
            <person name="Lucas S."/>
            <person name="Lapidus A."/>
            <person name="Barry K."/>
            <person name="Glavina del Rio T."/>
            <person name="Dalin E."/>
            <person name="Tice H."/>
            <person name="Pitluck S."/>
            <person name="Lowry S."/>
            <person name="Clum A."/>
            <person name="Schmutz J."/>
            <person name="Larimer F."/>
            <person name="Land M."/>
            <person name="Hauser L."/>
            <person name="Kyrpides N."/>
            <person name="Kim E."/>
            <person name="Schleheck D."/>
            <person name="Richardson P."/>
        </authorList>
    </citation>
    <scope>NUCLEOTIDE SEQUENCE [LARGE SCALE GENOMIC DNA]</scope>
    <source>
        <strain>DSM 14801 / SPH-1</strain>
    </source>
</reference>
<keyword id="KW-0413">Isomerase</keyword>
<keyword id="KW-1185">Reference proteome</keyword>
<keyword id="KW-0819">tRNA processing</keyword>
<proteinExistence type="inferred from homology"/>
<feature type="chain" id="PRO_1000097736" description="tRNA pseudouridine synthase A">
    <location>
        <begin position="1"/>
        <end position="282"/>
    </location>
</feature>
<feature type="active site" description="Nucleophile" evidence="1">
    <location>
        <position position="51"/>
    </location>
</feature>
<feature type="binding site" evidence="1">
    <location>
        <position position="109"/>
    </location>
    <ligand>
        <name>substrate</name>
    </ligand>
</feature>
<dbReference type="EC" id="5.4.99.12" evidence="1"/>
<dbReference type="EMBL" id="CP000884">
    <property type="protein sequence ID" value="ABX37870.1"/>
    <property type="molecule type" value="Genomic_DNA"/>
</dbReference>
<dbReference type="RefSeq" id="WP_012207040.1">
    <property type="nucleotide sequence ID" value="NC_010002.1"/>
</dbReference>
<dbReference type="SMR" id="A9BNH5"/>
<dbReference type="STRING" id="398578.Daci_5241"/>
<dbReference type="GeneID" id="24119324"/>
<dbReference type="KEGG" id="dac:Daci_5241"/>
<dbReference type="eggNOG" id="COG0101">
    <property type="taxonomic scope" value="Bacteria"/>
</dbReference>
<dbReference type="HOGENOM" id="CLU_014673_0_2_4"/>
<dbReference type="Proteomes" id="UP000000784">
    <property type="component" value="Chromosome"/>
</dbReference>
<dbReference type="GO" id="GO:0003723">
    <property type="term" value="F:RNA binding"/>
    <property type="evidence" value="ECO:0007669"/>
    <property type="project" value="InterPro"/>
</dbReference>
<dbReference type="GO" id="GO:0160147">
    <property type="term" value="F:tRNA pseudouridine(38-40) synthase activity"/>
    <property type="evidence" value="ECO:0007669"/>
    <property type="project" value="UniProtKB-EC"/>
</dbReference>
<dbReference type="GO" id="GO:0031119">
    <property type="term" value="P:tRNA pseudouridine synthesis"/>
    <property type="evidence" value="ECO:0007669"/>
    <property type="project" value="UniProtKB-UniRule"/>
</dbReference>
<dbReference type="CDD" id="cd02570">
    <property type="entry name" value="PseudoU_synth_EcTruA"/>
    <property type="match status" value="1"/>
</dbReference>
<dbReference type="FunFam" id="3.30.70.580:FF:000001">
    <property type="entry name" value="tRNA pseudouridine synthase A"/>
    <property type="match status" value="1"/>
</dbReference>
<dbReference type="Gene3D" id="3.30.70.660">
    <property type="entry name" value="Pseudouridine synthase I, catalytic domain, C-terminal subdomain"/>
    <property type="match status" value="1"/>
</dbReference>
<dbReference type="Gene3D" id="3.30.70.580">
    <property type="entry name" value="Pseudouridine synthase I, catalytic domain, N-terminal subdomain"/>
    <property type="match status" value="1"/>
</dbReference>
<dbReference type="HAMAP" id="MF_00171">
    <property type="entry name" value="TruA"/>
    <property type="match status" value="1"/>
</dbReference>
<dbReference type="InterPro" id="IPR020103">
    <property type="entry name" value="PsdUridine_synth_cat_dom_sf"/>
</dbReference>
<dbReference type="InterPro" id="IPR001406">
    <property type="entry name" value="PsdUridine_synth_TruA"/>
</dbReference>
<dbReference type="InterPro" id="IPR020097">
    <property type="entry name" value="PsdUridine_synth_TruA_a/b_dom"/>
</dbReference>
<dbReference type="InterPro" id="IPR020095">
    <property type="entry name" value="PsdUridine_synth_TruA_C"/>
</dbReference>
<dbReference type="InterPro" id="IPR020094">
    <property type="entry name" value="TruA/RsuA/RluB/E/F_N"/>
</dbReference>
<dbReference type="NCBIfam" id="TIGR00071">
    <property type="entry name" value="hisT_truA"/>
    <property type="match status" value="1"/>
</dbReference>
<dbReference type="PANTHER" id="PTHR11142">
    <property type="entry name" value="PSEUDOURIDYLATE SYNTHASE"/>
    <property type="match status" value="1"/>
</dbReference>
<dbReference type="PANTHER" id="PTHR11142:SF0">
    <property type="entry name" value="TRNA PSEUDOURIDINE SYNTHASE-LIKE 1"/>
    <property type="match status" value="1"/>
</dbReference>
<dbReference type="Pfam" id="PF01416">
    <property type="entry name" value="PseudoU_synth_1"/>
    <property type="match status" value="2"/>
</dbReference>
<dbReference type="PIRSF" id="PIRSF001430">
    <property type="entry name" value="tRNA_psdUrid_synth"/>
    <property type="match status" value="1"/>
</dbReference>
<dbReference type="SUPFAM" id="SSF55120">
    <property type="entry name" value="Pseudouridine synthase"/>
    <property type="match status" value="1"/>
</dbReference>
<accession>A9BNH5</accession>
<protein>
    <recommendedName>
        <fullName evidence="1">tRNA pseudouridine synthase A</fullName>
        <ecNumber evidence="1">5.4.99.12</ecNumber>
    </recommendedName>
    <alternativeName>
        <fullName evidence="1">tRNA pseudouridine(38-40) synthase</fullName>
    </alternativeName>
    <alternativeName>
        <fullName evidence="1">tRNA pseudouridylate synthase I</fullName>
    </alternativeName>
    <alternativeName>
        <fullName evidence="1">tRNA-uridine isomerase I</fullName>
    </alternativeName>
</protein>
<evidence type="ECO:0000255" key="1">
    <source>
        <dbReference type="HAMAP-Rule" id="MF_00171"/>
    </source>
</evidence>
<comment type="function">
    <text evidence="1">Formation of pseudouridine at positions 38, 39 and 40 in the anticodon stem and loop of transfer RNAs.</text>
</comment>
<comment type="catalytic activity">
    <reaction evidence="1">
        <text>uridine(38/39/40) in tRNA = pseudouridine(38/39/40) in tRNA</text>
        <dbReference type="Rhea" id="RHEA:22376"/>
        <dbReference type="Rhea" id="RHEA-COMP:10085"/>
        <dbReference type="Rhea" id="RHEA-COMP:10087"/>
        <dbReference type="ChEBI" id="CHEBI:65314"/>
        <dbReference type="ChEBI" id="CHEBI:65315"/>
        <dbReference type="EC" id="5.4.99.12"/>
    </reaction>
</comment>
<comment type="subunit">
    <text evidence="1">Homodimer.</text>
</comment>
<comment type="similarity">
    <text evidence="1">Belongs to the tRNA pseudouridine synthase TruA family.</text>
</comment>
<gene>
    <name evidence="1" type="primary">truA</name>
    <name type="ordered locus">Daci_5241</name>
</gene>
<name>TRUA_DELAS</name>